<comment type="function">
    <text evidence="1">Catalyzes the NADPH-dependent reduction of L-glutamate 5-phosphate into L-glutamate 5-semialdehyde and phosphate. The product spontaneously undergoes cyclization to form 1-pyrroline-5-carboxylate.</text>
</comment>
<comment type="catalytic activity">
    <reaction evidence="1">
        <text>L-glutamate 5-semialdehyde + phosphate + NADP(+) = L-glutamyl 5-phosphate + NADPH + H(+)</text>
        <dbReference type="Rhea" id="RHEA:19541"/>
        <dbReference type="ChEBI" id="CHEBI:15378"/>
        <dbReference type="ChEBI" id="CHEBI:43474"/>
        <dbReference type="ChEBI" id="CHEBI:57783"/>
        <dbReference type="ChEBI" id="CHEBI:58066"/>
        <dbReference type="ChEBI" id="CHEBI:58274"/>
        <dbReference type="ChEBI" id="CHEBI:58349"/>
        <dbReference type="EC" id="1.2.1.41"/>
    </reaction>
</comment>
<comment type="pathway">
    <text evidence="1">Amino-acid biosynthesis; L-proline biosynthesis; L-glutamate 5-semialdehyde from L-glutamate: step 2/2.</text>
</comment>
<comment type="subcellular location">
    <subcellularLocation>
        <location evidence="1">Cytoplasm</location>
    </subcellularLocation>
</comment>
<comment type="similarity">
    <text evidence="1">Belongs to the gamma-glutamyl phosphate reductase family.</text>
</comment>
<gene>
    <name evidence="1" type="primary">proA</name>
    <name type="ordered locus">BARBAKC583_0319</name>
</gene>
<proteinExistence type="inferred from homology"/>
<accession>A1URN6</accession>
<sequence>MKIMGKKARNAALVLAVVSAEQKKHALEMIALSLESQADEILCANNQDLINAAQNNMAAAMIDRLKLDELRLCAMIDSVRQIACLPDPVGQVINAWTRPNGLHISCVRTPLGVIGIIYESRPNVTIDASCLCLKSGNAAILRGGSDSFHSAYALHSALAMGLEKAGLPTDAIQMVETTDRDAVGEMLKGLDGTIDVIIPRGGQSLVKRVQSDARVPVFAHLAGLCHIYIDQSANVEMARDIVLNAKLRRTGICGAVETVLIDRQALEKFLPVLIALQEKGCEIRATEDIVSLVPTFALACEEDWSQEYLDAILSVKTVEGVEGAIEHIVRYSSGHTESIIAEDVGVVEIFFNRLDSAILLHNASTQFADGGEFGFGAEIGIATGKMHARGPIGVEQLTSFQYQIRGNGQVRP</sequence>
<protein>
    <recommendedName>
        <fullName evidence="1">Gamma-glutamyl phosphate reductase</fullName>
        <shortName evidence="1">GPR</shortName>
        <ecNumber evidence="1">1.2.1.41</ecNumber>
    </recommendedName>
    <alternativeName>
        <fullName evidence="1">Glutamate-5-semialdehyde dehydrogenase</fullName>
    </alternativeName>
    <alternativeName>
        <fullName evidence="1">Glutamyl-gamma-semialdehyde dehydrogenase</fullName>
        <shortName evidence="1">GSA dehydrogenase</shortName>
    </alternativeName>
</protein>
<evidence type="ECO:0000255" key="1">
    <source>
        <dbReference type="HAMAP-Rule" id="MF_00412"/>
    </source>
</evidence>
<reference key="1">
    <citation type="submission" date="2006-12" db="EMBL/GenBank/DDBJ databases">
        <authorList>
            <person name="Hendrix L."/>
            <person name="Mohamoud Y."/>
            <person name="Radune D."/>
            <person name="Shvartsbeyn A."/>
            <person name="Daugherty S."/>
            <person name="Dodson R."/>
            <person name="Durkin A.S."/>
            <person name="Harkins D."/>
            <person name="Huot H."/>
            <person name="Kothari S.P."/>
            <person name="Madupu R."/>
            <person name="Li J."/>
            <person name="Nelson W.C."/>
            <person name="Shrivastava S."/>
            <person name="Giglio M.G."/>
            <person name="Haft D."/>
            <person name="Selengut J."/>
            <person name="Fraser-Ligget C."/>
            <person name="Seshadri R."/>
        </authorList>
    </citation>
    <scope>NUCLEOTIDE SEQUENCE [LARGE SCALE GENOMIC DNA]</scope>
    <source>
        <strain>ATCC 35685 / KC583 / Herrer 020/F12,63</strain>
    </source>
</reference>
<organism>
    <name type="scientific">Bartonella bacilliformis (strain ATCC 35685 / KC583 / Herrer 020/F12,63)</name>
    <dbReference type="NCBI Taxonomy" id="360095"/>
    <lineage>
        <taxon>Bacteria</taxon>
        <taxon>Pseudomonadati</taxon>
        <taxon>Pseudomonadota</taxon>
        <taxon>Alphaproteobacteria</taxon>
        <taxon>Hyphomicrobiales</taxon>
        <taxon>Bartonellaceae</taxon>
        <taxon>Bartonella</taxon>
    </lineage>
</organism>
<feature type="chain" id="PRO_1000049936" description="Gamma-glutamyl phosphate reductase">
    <location>
        <begin position="1"/>
        <end position="412"/>
    </location>
</feature>
<dbReference type="EC" id="1.2.1.41" evidence="1"/>
<dbReference type="EMBL" id="CP000524">
    <property type="protein sequence ID" value="ABM45406.1"/>
    <property type="molecule type" value="Genomic_DNA"/>
</dbReference>
<dbReference type="SMR" id="A1URN6"/>
<dbReference type="STRING" id="360095.BARBAKC583_0319"/>
<dbReference type="KEGG" id="bbk:BARBAKC583_0319"/>
<dbReference type="eggNOG" id="COG0014">
    <property type="taxonomic scope" value="Bacteria"/>
</dbReference>
<dbReference type="HOGENOM" id="CLU_030231_0_0_5"/>
<dbReference type="UniPathway" id="UPA00098">
    <property type="reaction ID" value="UER00360"/>
</dbReference>
<dbReference type="Proteomes" id="UP000000643">
    <property type="component" value="Chromosome"/>
</dbReference>
<dbReference type="GO" id="GO:0005737">
    <property type="term" value="C:cytoplasm"/>
    <property type="evidence" value="ECO:0007669"/>
    <property type="project" value="UniProtKB-SubCell"/>
</dbReference>
<dbReference type="GO" id="GO:0004350">
    <property type="term" value="F:glutamate-5-semialdehyde dehydrogenase activity"/>
    <property type="evidence" value="ECO:0007669"/>
    <property type="project" value="UniProtKB-UniRule"/>
</dbReference>
<dbReference type="GO" id="GO:0050661">
    <property type="term" value="F:NADP binding"/>
    <property type="evidence" value="ECO:0007669"/>
    <property type="project" value="InterPro"/>
</dbReference>
<dbReference type="GO" id="GO:0055129">
    <property type="term" value="P:L-proline biosynthetic process"/>
    <property type="evidence" value="ECO:0007669"/>
    <property type="project" value="UniProtKB-UniRule"/>
</dbReference>
<dbReference type="CDD" id="cd07079">
    <property type="entry name" value="ALDH_F18-19_ProA-GPR"/>
    <property type="match status" value="1"/>
</dbReference>
<dbReference type="Gene3D" id="3.40.605.10">
    <property type="entry name" value="Aldehyde Dehydrogenase, Chain A, domain 1"/>
    <property type="match status" value="1"/>
</dbReference>
<dbReference type="Gene3D" id="3.40.309.10">
    <property type="entry name" value="Aldehyde Dehydrogenase, Chain A, domain 2"/>
    <property type="match status" value="1"/>
</dbReference>
<dbReference type="HAMAP" id="MF_00412">
    <property type="entry name" value="ProA"/>
    <property type="match status" value="1"/>
</dbReference>
<dbReference type="InterPro" id="IPR016161">
    <property type="entry name" value="Ald_DH/histidinol_DH"/>
</dbReference>
<dbReference type="InterPro" id="IPR016163">
    <property type="entry name" value="Ald_DH_C"/>
</dbReference>
<dbReference type="InterPro" id="IPR016162">
    <property type="entry name" value="Ald_DH_N"/>
</dbReference>
<dbReference type="InterPro" id="IPR015590">
    <property type="entry name" value="Aldehyde_DH_dom"/>
</dbReference>
<dbReference type="InterPro" id="IPR020593">
    <property type="entry name" value="G-glutamylP_reductase_CS"/>
</dbReference>
<dbReference type="InterPro" id="IPR012134">
    <property type="entry name" value="Glu-5-SA_DH"/>
</dbReference>
<dbReference type="InterPro" id="IPR000965">
    <property type="entry name" value="GPR_dom"/>
</dbReference>
<dbReference type="NCBIfam" id="NF001221">
    <property type="entry name" value="PRK00197.1"/>
    <property type="match status" value="1"/>
</dbReference>
<dbReference type="NCBIfam" id="TIGR00407">
    <property type="entry name" value="proA"/>
    <property type="match status" value="1"/>
</dbReference>
<dbReference type="PANTHER" id="PTHR11063:SF8">
    <property type="entry name" value="DELTA-1-PYRROLINE-5-CARBOXYLATE SYNTHASE"/>
    <property type="match status" value="1"/>
</dbReference>
<dbReference type="PANTHER" id="PTHR11063">
    <property type="entry name" value="GLUTAMATE SEMIALDEHYDE DEHYDROGENASE"/>
    <property type="match status" value="1"/>
</dbReference>
<dbReference type="Pfam" id="PF00171">
    <property type="entry name" value="Aldedh"/>
    <property type="match status" value="1"/>
</dbReference>
<dbReference type="PIRSF" id="PIRSF000151">
    <property type="entry name" value="GPR"/>
    <property type="match status" value="1"/>
</dbReference>
<dbReference type="SUPFAM" id="SSF53720">
    <property type="entry name" value="ALDH-like"/>
    <property type="match status" value="1"/>
</dbReference>
<dbReference type="PROSITE" id="PS01223">
    <property type="entry name" value="PROA"/>
    <property type="match status" value="1"/>
</dbReference>
<name>PROA_BARBK</name>
<keyword id="KW-0028">Amino-acid biosynthesis</keyword>
<keyword id="KW-0963">Cytoplasm</keyword>
<keyword id="KW-0521">NADP</keyword>
<keyword id="KW-0560">Oxidoreductase</keyword>
<keyword id="KW-0641">Proline biosynthesis</keyword>